<gene>
    <name evidence="8" type="primary">MDR4</name>
    <name type="ORF">TERG_07801</name>
</gene>
<protein>
    <recommendedName>
        <fullName evidence="8">ABC multidrug transporter MDR2</fullName>
    </recommendedName>
    <alternativeName>
        <fullName evidence="8">Multidrug resistance protein 2</fullName>
    </alternativeName>
</protein>
<keyword id="KW-0067">ATP-binding</keyword>
<keyword id="KW-1003">Cell membrane</keyword>
<keyword id="KW-0325">Glycoprotein</keyword>
<keyword id="KW-0472">Membrane</keyword>
<keyword id="KW-0547">Nucleotide-binding</keyword>
<keyword id="KW-1185">Reference proteome</keyword>
<keyword id="KW-0677">Repeat</keyword>
<keyword id="KW-0812">Transmembrane</keyword>
<keyword id="KW-1133">Transmembrane helix</keyword>
<keyword id="KW-0813">Transport</keyword>
<evidence type="ECO:0000255" key="1"/>
<evidence type="ECO:0000255" key="2">
    <source>
        <dbReference type="PROSITE-ProRule" id="PRU00434"/>
    </source>
</evidence>
<evidence type="ECO:0000255" key="3">
    <source>
        <dbReference type="PROSITE-ProRule" id="PRU00441"/>
    </source>
</evidence>
<evidence type="ECO:0000255" key="4">
    <source>
        <dbReference type="PROSITE-ProRule" id="PRU00498"/>
    </source>
</evidence>
<evidence type="ECO:0000256" key="5">
    <source>
        <dbReference type="SAM" id="MobiDB-lite"/>
    </source>
</evidence>
<evidence type="ECO:0000269" key="6">
    <source>
    </source>
</evidence>
<evidence type="ECO:0000269" key="7">
    <source>
    </source>
</evidence>
<evidence type="ECO:0000303" key="8">
    <source>
    </source>
</evidence>
<evidence type="ECO:0000305" key="9"/>
<evidence type="ECO:0000305" key="10">
    <source>
    </source>
</evidence>
<sequence length="1366" mass="148118">MTNTGILAPSSQQSEPEWWTKTQKFFSRENTITPTFGYFRLLFGTQPGKTDIALIVIGTIAGIGAGIPFPLLGILFGELVDDLNSSTCSTTQAPPGGYQAAITTKVLQVIYASILNFVCMYIHTGCWSMVGERLVRRLRTKYFHSLLRQEIAFTDTLPSGDVTSRLVSDIEVIQAGTSEKVGLFIGTISYFVAAYIVAFLKVATIAAMLMSVVPIYFLMAFGGGHYIKKYSSRISTHINAATSIVSSSLSHMSIVHAFNANARLEALFAQHLVSARMDALKKAITHSIQFGMLYFVAYASNALAFWQGSRMIADLAEGKPSKVSVGAVYTVIFVLLDASFVLSQMAPFMHIFASAASAGDRLMTTIKRQSAIDGTSSEGDSTISLASEEIELQDVTFNYPARPEVPVLQGVSFKIPPNKHTAIVGTSGSGKSTVVALLERLYDPITGCVRVGNRDLKEINVRHLRGSIGLVQQEPNLLDRSILENIAHGLVSSSQEKHKHLLPILLGPSLSELTEKIRQGASEDEAVAEQGDVVREIVNLARHAATLSNAIDFINALPDGLATRVGSSGAELSGGQKQRIALARALIRDPPVLLLDEATAALDSTSERLIQAALTKVSENVTTVSIAHRLATAKDADNIIVMQKGKVMEQGTHMDLVARDGVYAGMVRLQNIGKFSSSSSIMTESTQVDVNIDRSLTTDTLLNKEEKLSLEQGVLDEKEKPAQLYMPEEADSLPTEPEAKKEKPKQTLWATMRGSFPLIRPNLLLISLGLITSIMIGVSYTGEAVIFGHTVGSLSVCRGGPSIRSSGMLFGLLFFILAVAKFAAVIVNGAAFGWAAEKTLYRTRVLSLRSLLRQPLEWHNADGRTPGLLVALVTSDASALSSLTGTTIGVLFSTVANLFAGVILSHVIAWKIAVVLLATLPVLLASGVLRLRVMAQYQKKHQKAYAKATAITVETVDNIKSIAAFSLEQEAYSVFNRSLKAPYKSNMKSVLHGNFWLSLAYSISTLVYALAYWWGSQQILAGMYTQVQFFIVLPALLFSTQSCGQMFALVPDISKARIAASNIVDLLSIKHEGDEEYDKTGSKASAKHTDPRFNMLEDKPRDVEAQLTTTTPSSFPTKGMGVQFRNVHFRYPSRPNQPALDDLSINISPGQFCALVGPSGSGKSTTFALLEKFYNPASGSIIIDGVDITKQSGAAFRDTIALVPQENVMFEGTVAFNIGLGARPDVEATQEEIEEACRLANIHDTIAALPDGYNTVCSQDGKQFSGGQRQRLSIARALVRKPRLLLLDESTSALDVESEKHVQDALAKVARKTTIVAIAHRLNTIHRADRIFMIEGGKCVDQGTHAELVERCESYRANVIHQSLDA</sequence>
<feature type="chain" id="PRO_0000447182" description="ABC multidrug transporter MDR2">
    <location>
        <begin position="1"/>
        <end position="1366"/>
    </location>
</feature>
<feature type="transmembrane region" description="Helical" evidence="1 3">
    <location>
        <begin position="52"/>
        <end position="72"/>
    </location>
</feature>
<feature type="transmembrane region" description="Helical" evidence="1 3">
    <location>
        <begin position="106"/>
        <end position="126"/>
    </location>
</feature>
<feature type="transmembrane region" description="Helical" evidence="1 3">
    <location>
        <begin position="180"/>
        <end position="200"/>
    </location>
</feature>
<feature type="transmembrane region" description="Helical" evidence="1 3">
    <location>
        <begin position="202"/>
        <end position="222"/>
    </location>
</feature>
<feature type="transmembrane region" description="Helical" evidence="1 3">
    <location>
        <begin position="288"/>
        <end position="308"/>
    </location>
</feature>
<feature type="transmembrane region" description="Helical" evidence="1 3">
    <location>
        <begin position="323"/>
        <end position="343"/>
    </location>
</feature>
<feature type="transmembrane region" description="Helical" evidence="1 3">
    <location>
        <begin position="768"/>
        <end position="788"/>
    </location>
</feature>
<feature type="transmembrane region" description="Helical" evidence="1 3">
    <location>
        <begin position="807"/>
        <end position="827"/>
    </location>
</feature>
<feature type="transmembrane region" description="Helical" evidence="1 3">
    <location>
        <begin position="868"/>
        <end position="888"/>
    </location>
</feature>
<feature type="transmembrane region" description="Helical" evidence="1 3">
    <location>
        <begin position="898"/>
        <end position="918"/>
    </location>
</feature>
<feature type="transmembrane region" description="Helical" evidence="1 3">
    <location>
        <begin position="995"/>
        <end position="1015"/>
    </location>
</feature>
<feature type="transmembrane region" description="Helical" evidence="1 3">
    <location>
        <begin position="1019"/>
        <end position="1039"/>
    </location>
</feature>
<feature type="domain" description="ABC transmembrane type-1 1" evidence="3">
    <location>
        <begin position="56"/>
        <end position="354"/>
    </location>
</feature>
<feature type="domain" description="ABC transporter 1" evidence="2">
    <location>
        <begin position="390"/>
        <end position="669"/>
    </location>
</feature>
<feature type="domain" description="ABC transmembrane type-1 2" evidence="3">
    <location>
        <begin position="768"/>
        <end position="1055"/>
    </location>
</feature>
<feature type="domain" description="ABC transporter 2" evidence="2">
    <location>
        <begin position="1122"/>
        <end position="1361"/>
    </location>
</feature>
<feature type="region of interest" description="Disordered" evidence="5">
    <location>
        <begin position="727"/>
        <end position="746"/>
    </location>
</feature>
<feature type="binding site" evidence="2">
    <location>
        <begin position="425"/>
        <end position="432"/>
    </location>
    <ligand>
        <name>ATP</name>
        <dbReference type="ChEBI" id="CHEBI:30616"/>
    </ligand>
</feature>
<feature type="binding site" evidence="2">
    <location>
        <begin position="1157"/>
        <end position="1164"/>
    </location>
    <ligand>
        <name>ATP</name>
        <dbReference type="ChEBI" id="CHEBI:30616"/>
    </ligand>
</feature>
<feature type="glycosylation site" description="N-linked (GlcNAc...) asparagine" evidence="4">
    <location>
        <position position="84"/>
    </location>
</feature>
<feature type="glycosylation site" description="N-linked (GlcNAc...) asparagine" evidence="4">
    <location>
        <position position="620"/>
    </location>
</feature>
<feature type="glycosylation site" description="N-linked (GlcNAc...) asparagine" evidence="4">
    <location>
        <position position="976"/>
    </location>
</feature>
<reference key="1">
    <citation type="journal article" date="2012" name="MBio">
        <title>Comparative genome analysis of Trichophyton rubrum and related dermatophytes reveals candidate genes involved in infection.</title>
        <authorList>
            <person name="Martinez D.A."/>
            <person name="Oliver B.G."/>
            <person name="Graeser Y."/>
            <person name="Goldberg J.M."/>
            <person name="Li W."/>
            <person name="Martinez-Rossi N.M."/>
            <person name="Monod M."/>
            <person name="Shelest E."/>
            <person name="Barton R.C."/>
            <person name="Birch E."/>
            <person name="Brakhage A.A."/>
            <person name="Chen Z."/>
            <person name="Gurr S.J."/>
            <person name="Heiman D."/>
            <person name="Heitman J."/>
            <person name="Kosti I."/>
            <person name="Rossi A."/>
            <person name="Saif S."/>
            <person name="Samalova M."/>
            <person name="Saunders C.W."/>
            <person name="Shea T."/>
            <person name="Summerbell R.C."/>
            <person name="Xu J."/>
            <person name="Young S."/>
            <person name="Zeng Q."/>
            <person name="Birren B.W."/>
            <person name="Cuomo C.A."/>
            <person name="White T.C."/>
        </authorList>
    </citation>
    <scope>NUCLEOTIDE SEQUENCE [LARGE SCALE GENOMIC DNA]</scope>
    <source>
        <strain>ATCC MYA-4607 / CBS 118892</strain>
    </source>
</reference>
<reference key="2">
    <citation type="journal article" date="2016" name="J. Med. Microbiol.">
        <title>Compensatory expression of multidrug-resistance genes encoding ABC transporters in dermatophytes.</title>
        <authorList>
            <person name="Martins M.P."/>
            <person name="Franceschini A.C.C."/>
            <person name="Jacob T.R."/>
            <person name="Rossi A."/>
            <person name="Martinez-Rossi N.M."/>
        </authorList>
    </citation>
    <scope>INDUCTION</scope>
</reference>
<reference key="3">
    <citation type="journal article" date="2019" name="Antimicrob. Agents Chemother.">
        <title>Trichophyton rubrum azole resistance mediated by a new ABC transporter, TruMDR3.</title>
        <authorList>
            <person name="Monod M."/>
            <person name="Feuermann M."/>
            <person name="Salamin K."/>
            <person name="Fratti M."/>
            <person name="Makino M."/>
            <person name="Alshahni M.M."/>
            <person name="Makimura K."/>
            <person name="Yamada T."/>
        </authorList>
    </citation>
    <scope>FUNCTION</scope>
</reference>
<comment type="function">
    <text evidence="7 9">Pleiotropic ABC efflux transporter that may be involved in the modulation susceptibility to a wide range of unrelated cytotoxic compounds (Probable). Does not act as an efflux pump for azoles, including fluconazole, itraconazole, ketoconazole, miconazole and voriconazole, nor does it modulate susceptibility to cycloheximide (PubMed:31501141).</text>
</comment>
<comment type="subcellular location">
    <subcellularLocation>
        <location evidence="10">Cell membrane</location>
        <topology evidence="1">Multi-pass membrane protein</topology>
    </subcellularLocation>
</comment>
<comment type="induction">
    <text evidence="6">Expression is induced upon exposure to amphotericin B, the allylamine terbinafine, and the azole itraconazole.</text>
</comment>
<comment type="similarity">
    <text evidence="9">Belongs to the ABC transporter superfamily. ABCB family. Multidrug resistance exporter (TC 3.A.1.201) subfamily.</text>
</comment>
<dbReference type="EMBL" id="GG700658">
    <property type="status" value="NOT_ANNOTATED_CDS"/>
    <property type="molecule type" value="Genomic_DNA"/>
</dbReference>
<dbReference type="SMR" id="P0CU83"/>
<dbReference type="STRING" id="559305.P0CU83"/>
<dbReference type="GlyCosmos" id="P0CU83">
    <property type="glycosylation" value="3 sites, No reported glycans"/>
</dbReference>
<dbReference type="InParanoid" id="P0CU83"/>
<dbReference type="Proteomes" id="UP000008864">
    <property type="component" value="Unassembled WGS sequence"/>
</dbReference>
<dbReference type="GO" id="GO:0005743">
    <property type="term" value="C:mitochondrial inner membrane"/>
    <property type="evidence" value="ECO:0007669"/>
    <property type="project" value="TreeGrafter"/>
</dbReference>
<dbReference type="GO" id="GO:0005886">
    <property type="term" value="C:plasma membrane"/>
    <property type="evidence" value="ECO:0007669"/>
    <property type="project" value="UniProtKB-SubCell"/>
</dbReference>
<dbReference type="GO" id="GO:0015421">
    <property type="term" value="F:ABC-type oligopeptide transporter activity"/>
    <property type="evidence" value="ECO:0007669"/>
    <property type="project" value="TreeGrafter"/>
</dbReference>
<dbReference type="GO" id="GO:0005524">
    <property type="term" value="F:ATP binding"/>
    <property type="evidence" value="ECO:0007669"/>
    <property type="project" value="UniProtKB-KW"/>
</dbReference>
<dbReference type="GO" id="GO:0016887">
    <property type="term" value="F:ATP hydrolysis activity"/>
    <property type="evidence" value="ECO:0007669"/>
    <property type="project" value="InterPro"/>
</dbReference>
<dbReference type="GO" id="GO:0090374">
    <property type="term" value="P:oligopeptide export from mitochondrion"/>
    <property type="evidence" value="ECO:0007669"/>
    <property type="project" value="TreeGrafter"/>
</dbReference>
<dbReference type="CDD" id="cd18577">
    <property type="entry name" value="ABC_6TM_Pgp_ABCB1_D1_like"/>
    <property type="match status" value="1"/>
</dbReference>
<dbReference type="CDD" id="cd18578">
    <property type="entry name" value="ABC_6TM_Pgp_ABCB1_D2_like"/>
    <property type="match status" value="1"/>
</dbReference>
<dbReference type="FunFam" id="1.20.1560.10:FF:000057">
    <property type="entry name" value="ABC multidrug transporter SitT"/>
    <property type="match status" value="1"/>
</dbReference>
<dbReference type="FunFam" id="3.40.50.300:FF:000913">
    <property type="entry name" value="ABC multidrug transporter SitT"/>
    <property type="match status" value="1"/>
</dbReference>
<dbReference type="Gene3D" id="1.20.1560.10">
    <property type="entry name" value="ABC transporter type 1, transmembrane domain"/>
    <property type="match status" value="1"/>
</dbReference>
<dbReference type="Gene3D" id="3.40.50.300">
    <property type="entry name" value="P-loop containing nucleotide triphosphate hydrolases"/>
    <property type="match status" value="2"/>
</dbReference>
<dbReference type="InterPro" id="IPR003593">
    <property type="entry name" value="AAA+_ATPase"/>
</dbReference>
<dbReference type="InterPro" id="IPR011527">
    <property type="entry name" value="ABC1_TM_dom"/>
</dbReference>
<dbReference type="InterPro" id="IPR036640">
    <property type="entry name" value="ABC1_TM_sf"/>
</dbReference>
<dbReference type="InterPro" id="IPR003439">
    <property type="entry name" value="ABC_transporter-like_ATP-bd"/>
</dbReference>
<dbReference type="InterPro" id="IPR017871">
    <property type="entry name" value="ABC_transporter-like_CS"/>
</dbReference>
<dbReference type="InterPro" id="IPR027417">
    <property type="entry name" value="P-loop_NTPase"/>
</dbReference>
<dbReference type="InterPro" id="IPR039421">
    <property type="entry name" value="Type_1_exporter"/>
</dbReference>
<dbReference type="PANTHER" id="PTHR43394:SF11">
    <property type="entry name" value="ATP-BINDING CASSETTE TRANSPORTER"/>
    <property type="match status" value="1"/>
</dbReference>
<dbReference type="PANTHER" id="PTHR43394">
    <property type="entry name" value="ATP-DEPENDENT PERMEASE MDL1, MITOCHONDRIAL"/>
    <property type="match status" value="1"/>
</dbReference>
<dbReference type="Pfam" id="PF00664">
    <property type="entry name" value="ABC_membrane"/>
    <property type="match status" value="2"/>
</dbReference>
<dbReference type="Pfam" id="PF00005">
    <property type="entry name" value="ABC_tran"/>
    <property type="match status" value="2"/>
</dbReference>
<dbReference type="SMART" id="SM00382">
    <property type="entry name" value="AAA"/>
    <property type="match status" value="2"/>
</dbReference>
<dbReference type="SUPFAM" id="SSF90123">
    <property type="entry name" value="ABC transporter transmembrane region"/>
    <property type="match status" value="2"/>
</dbReference>
<dbReference type="SUPFAM" id="SSF52540">
    <property type="entry name" value="P-loop containing nucleoside triphosphate hydrolases"/>
    <property type="match status" value="2"/>
</dbReference>
<dbReference type="PROSITE" id="PS50929">
    <property type="entry name" value="ABC_TM1F"/>
    <property type="match status" value="2"/>
</dbReference>
<dbReference type="PROSITE" id="PS00211">
    <property type="entry name" value="ABC_TRANSPORTER_1"/>
    <property type="match status" value="2"/>
</dbReference>
<dbReference type="PROSITE" id="PS50893">
    <property type="entry name" value="ABC_TRANSPORTER_2"/>
    <property type="match status" value="2"/>
</dbReference>
<accession>P0CU83</accession>
<organism>
    <name type="scientific">Trichophyton rubrum (strain ATCC MYA-4607 / CBS 118892)</name>
    <name type="common">Athlete's foot fungus</name>
    <dbReference type="NCBI Taxonomy" id="559305"/>
    <lineage>
        <taxon>Eukaryota</taxon>
        <taxon>Fungi</taxon>
        <taxon>Dikarya</taxon>
        <taxon>Ascomycota</taxon>
        <taxon>Pezizomycotina</taxon>
        <taxon>Eurotiomycetes</taxon>
        <taxon>Eurotiomycetidae</taxon>
        <taxon>Onygenales</taxon>
        <taxon>Arthrodermataceae</taxon>
        <taxon>Trichophyton</taxon>
    </lineage>
</organism>
<proteinExistence type="evidence at transcript level"/>
<name>MDR4_TRIRC</name>